<keyword id="KW-0165">Cleavage on pair of basic residues</keyword>
<keyword id="KW-1015">Disulfide bond</keyword>
<keyword id="KW-0960">Knottin</keyword>
<keyword id="KW-0964">Secreted</keyword>
<keyword id="KW-0732">Signal</keyword>
<keyword id="KW-0800">Toxin</keyword>
<feature type="signal peptide" evidence="2">
    <location>
        <begin position="1"/>
        <end position="22"/>
    </location>
</feature>
<feature type="propeptide" id="PRO_0000034993" evidence="1">
    <location>
        <begin position="23"/>
        <end position="51"/>
    </location>
</feature>
<feature type="peptide" id="PRO_0000034994" description="Conotoxin 6">
    <location>
        <begin position="52"/>
        <end position="78"/>
    </location>
</feature>
<feature type="disulfide bond" evidence="1">
    <location>
        <begin position="53"/>
        <end position="69"/>
    </location>
</feature>
<feature type="disulfide bond" evidence="1">
    <location>
        <begin position="60"/>
        <end position="73"/>
    </location>
</feature>
<feature type="disulfide bond" evidence="1">
    <location>
        <begin position="68"/>
        <end position="77"/>
    </location>
</feature>
<dbReference type="EMBL" id="AJ851186">
    <property type="protein sequence ID" value="CAH64859.1"/>
    <property type="molecule type" value="mRNA"/>
</dbReference>
<dbReference type="SMR" id="Q5K0C2"/>
<dbReference type="ConoServer" id="1075">
    <property type="toxin name" value="Conotoxin-5 precursor"/>
</dbReference>
<dbReference type="GO" id="GO:0005576">
    <property type="term" value="C:extracellular region"/>
    <property type="evidence" value="ECO:0007669"/>
    <property type="project" value="UniProtKB-SubCell"/>
</dbReference>
<dbReference type="GO" id="GO:0008200">
    <property type="term" value="F:ion channel inhibitor activity"/>
    <property type="evidence" value="ECO:0007669"/>
    <property type="project" value="InterPro"/>
</dbReference>
<dbReference type="GO" id="GO:0090729">
    <property type="term" value="F:toxin activity"/>
    <property type="evidence" value="ECO:0007669"/>
    <property type="project" value="UniProtKB-KW"/>
</dbReference>
<dbReference type="InterPro" id="IPR004214">
    <property type="entry name" value="Conotoxin"/>
</dbReference>
<dbReference type="Pfam" id="PF02950">
    <property type="entry name" value="Conotoxin"/>
    <property type="match status" value="1"/>
</dbReference>
<organism>
    <name type="scientific">Conus imperialis</name>
    <name type="common">Imperial cone</name>
    <dbReference type="NCBI Taxonomy" id="35631"/>
    <lineage>
        <taxon>Eukaryota</taxon>
        <taxon>Metazoa</taxon>
        <taxon>Spiralia</taxon>
        <taxon>Lophotrochozoa</taxon>
        <taxon>Mollusca</taxon>
        <taxon>Gastropoda</taxon>
        <taxon>Caenogastropoda</taxon>
        <taxon>Neogastropoda</taxon>
        <taxon>Conoidea</taxon>
        <taxon>Conidae</taxon>
        <taxon>Conus</taxon>
        <taxon>Stephanoconus</taxon>
    </lineage>
</organism>
<sequence>MKLTCMMIVAVLFLTAWIFITADNSRNGIENLPRMRRHEMKNPKASKLNKRGCREGGEFCGTLYEERCCSGWCFFVCV</sequence>
<proteinExistence type="evidence at transcript level"/>
<evidence type="ECO:0000250" key="1"/>
<evidence type="ECO:0000255" key="2"/>
<evidence type="ECO:0000305" key="3"/>
<reference key="1">
    <citation type="journal article" date="2005" name="Peptides">
        <title>Direct cDNA cloning of novel conopeptide precursors of the O-superfamily.</title>
        <authorList>
            <person name="Kauferstein S."/>
            <person name="Melaun C."/>
            <person name="Mebs D."/>
        </authorList>
    </citation>
    <scope>NUCLEOTIDE SEQUENCE [MRNA]</scope>
    <source>
        <tissue>Venom duct</tissue>
    </source>
</reference>
<accession>Q5K0C2</accession>
<comment type="subcellular location">
    <subcellularLocation>
        <location evidence="1">Secreted</location>
    </subcellularLocation>
</comment>
<comment type="tissue specificity">
    <text>Expressed by the venom duct.</text>
</comment>
<comment type="domain">
    <text evidence="1">The presence of a 'disulfide through disulfide knot' structurally defines this protein as a knottin.</text>
</comment>
<comment type="domain">
    <text>The cysteine framework is VI/VII (C-C-CC-C-C).</text>
</comment>
<comment type="similarity">
    <text evidence="3">Belongs to the conotoxin O1 superfamily.</text>
</comment>
<protein>
    <recommendedName>
        <fullName>Conotoxin 6</fullName>
    </recommendedName>
</protein>
<name>O166_CONIM</name>